<feature type="chain" id="PRO_0000248371" description="Very-long-chain 3-oxoacyl-CoA reductase-A">
    <location>
        <begin position="1"/>
        <end position="319"/>
    </location>
</feature>
<feature type="transmembrane region" description="Helical" evidence="3">
    <location>
        <begin position="17"/>
        <end position="37"/>
    </location>
</feature>
<feature type="transmembrane region" description="Helical" evidence="3">
    <location>
        <begin position="188"/>
        <end position="208"/>
    </location>
</feature>
<feature type="transmembrane region" description="Helical" evidence="3">
    <location>
        <begin position="282"/>
        <end position="302"/>
    </location>
</feature>
<feature type="active site" description="Proton acceptor" evidence="4">
    <location>
        <position position="208"/>
    </location>
</feature>
<feature type="binding site" evidence="1">
    <location>
        <begin position="56"/>
        <end position="85"/>
    </location>
    <ligand>
        <name>NADP(+)</name>
        <dbReference type="ChEBI" id="CHEBI:58349"/>
    </ligand>
</feature>
<feature type="binding site" evidence="1">
    <location>
        <position position="195"/>
    </location>
    <ligand>
        <name>substrate</name>
    </ligand>
</feature>
<feature type="sequence conflict" description="In Ref. 2; AAH48053." evidence="6" ref="2">
    <original>K</original>
    <variation>E</variation>
    <location>
        <position position="187"/>
    </location>
</feature>
<gene>
    <name type="primary">hsd17b12a</name>
    <name type="ORF">zgc:55589</name>
</gene>
<protein>
    <recommendedName>
        <fullName evidence="6">Very-long-chain 3-oxoacyl-CoA reductase-A</fullName>
        <ecNumber evidence="2">1.1.1.330</ecNumber>
    </recommendedName>
    <alternativeName>
        <fullName evidence="2">17-beta-hydroxysteroid dehydrogenase 12-A</fullName>
        <shortName evidence="2">17-beta-HSD 12-A</shortName>
        <shortName>zf3.1</shortName>
        <shortName>zfHSD17B12A</shortName>
    </alternativeName>
    <alternativeName>
        <fullName evidence="2">3-ketoacyl-CoA reductase</fullName>
        <shortName evidence="2">KAR</shortName>
    </alternativeName>
    <alternativeName>
        <fullName evidence="2">Estradiol 17-beta-dehydrogenase 12-A</fullName>
        <ecNumber evidence="2">1.1.1.62</ecNumber>
    </alternativeName>
</protein>
<organism>
    <name type="scientific">Danio rerio</name>
    <name type="common">Zebrafish</name>
    <name type="synonym">Brachydanio rerio</name>
    <dbReference type="NCBI Taxonomy" id="7955"/>
    <lineage>
        <taxon>Eukaryota</taxon>
        <taxon>Metazoa</taxon>
        <taxon>Chordata</taxon>
        <taxon>Craniata</taxon>
        <taxon>Vertebrata</taxon>
        <taxon>Euteleostomi</taxon>
        <taxon>Actinopterygii</taxon>
        <taxon>Neopterygii</taxon>
        <taxon>Teleostei</taxon>
        <taxon>Ostariophysi</taxon>
        <taxon>Cypriniformes</taxon>
        <taxon>Danionidae</taxon>
        <taxon>Danioninae</taxon>
        <taxon>Danio</taxon>
    </lineage>
</organism>
<sequence>MESFNVVETLQPAERALFWVGALITASLALYVVYKTITGFRIWVLGNGDLLSPKLGKWAVVTGATDGIGKSYAEELARRGFSMMLISRSQEKLDDVAKSLESTYKVETKTIAVDFSQIDVYPKIEKGLAGLEIGILVNNVGISYSYPEFFLHIPDLENFITTMINVNITSVCQMTRLVLPRMEARAKGVILNISSASGMFPVPLLTIYSSTKAFVDFFSRGLQTEYKCKGIIIQSVLPFFVATKMTKIRKPTLDKPTPERYVAAELNTVGLQDQTNGYFPHAVMGWVTTILAPIDLVLNLGLRMNKAQRGGYLRRRKLR</sequence>
<proteinExistence type="evidence at transcript level"/>
<accession>Q6P3L6</accession>
<accession>Q7ZUN4</accession>
<comment type="function">
    <text evidence="2">Catalyzes the second of the four reactions of the long-chain fatty acids elongation cycle. This endoplasmic reticulum-bound enzymatic process, allows the addition of two carbons to the chain of long- and very long-chain fatty acids/VLCFAs per cycle. This enzyme has a 3-ketoacyl-CoA reductase activity, reducing 3-ketoacyl-CoA to 3-hydroxyacyl-CoA, within each cycle of fatty acid elongation. Thereby, it may participate in the production of VLCFAs of different chain lengths that are involved in multiple biological processes as precursors of membrane lipids and lipid mediators. May also catalyze the transformation of estrone (E1) into estradiol (E2) and play a role in estrogen formation.</text>
</comment>
<comment type="catalytic activity">
    <reaction evidence="2">
        <text>a very-long-chain (3R)-3-hydroxyacyl-CoA + NADP(+) = a very-long-chain 3-oxoacyl-CoA + NADPH + H(+)</text>
        <dbReference type="Rhea" id="RHEA:48680"/>
        <dbReference type="ChEBI" id="CHEBI:15378"/>
        <dbReference type="ChEBI" id="CHEBI:57783"/>
        <dbReference type="ChEBI" id="CHEBI:58349"/>
        <dbReference type="ChEBI" id="CHEBI:85440"/>
        <dbReference type="ChEBI" id="CHEBI:90725"/>
        <dbReference type="EC" id="1.1.1.330"/>
    </reaction>
</comment>
<comment type="catalytic activity">
    <reaction evidence="2">
        <text>17beta-estradiol + NAD(+) = estrone + NADH + H(+)</text>
        <dbReference type="Rhea" id="RHEA:24612"/>
        <dbReference type="ChEBI" id="CHEBI:15378"/>
        <dbReference type="ChEBI" id="CHEBI:16469"/>
        <dbReference type="ChEBI" id="CHEBI:17263"/>
        <dbReference type="ChEBI" id="CHEBI:57540"/>
        <dbReference type="ChEBI" id="CHEBI:57945"/>
        <dbReference type="EC" id="1.1.1.62"/>
    </reaction>
</comment>
<comment type="catalytic activity">
    <reaction evidence="2">
        <text>17beta-estradiol + NADP(+) = estrone + NADPH + H(+)</text>
        <dbReference type="Rhea" id="RHEA:24616"/>
        <dbReference type="ChEBI" id="CHEBI:15378"/>
        <dbReference type="ChEBI" id="CHEBI:16469"/>
        <dbReference type="ChEBI" id="CHEBI:17263"/>
        <dbReference type="ChEBI" id="CHEBI:57783"/>
        <dbReference type="ChEBI" id="CHEBI:58349"/>
        <dbReference type="EC" id="1.1.1.62"/>
    </reaction>
</comment>
<comment type="pathway">
    <text evidence="2">Lipid metabolism; fatty acid biosynthesis.</text>
</comment>
<comment type="pathway">
    <text evidence="2">Steroid biosynthesis; estrogen biosynthesis.</text>
</comment>
<comment type="subcellular location">
    <subcellularLocation>
        <location evidence="2">Endoplasmic reticulum membrane</location>
        <topology evidence="2">Multi-pass membrane protein</topology>
    </subcellularLocation>
</comment>
<comment type="developmental stage">
    <text evidence="5">Expressed throughout development. Weakly expressed during early developmental stages from shield to tailbud.</text>
</comment>
<comment type="similarity">
    <text evidence="6">Belongs to the short-chain dehydrogenases/reductases (SDR) family. 17-beta-HSD 3 subfamily.</text>
</comment>
<dbReference type="EC" id="1.1.1.330" evidence="2"/>
<dbReference type="EC" id="1.1.1.62" evidence="2"/>
<dbReference type="EMBL" id="AY551082">
    <property type="protein sequence ID" value="AAS58452.1"/>
    <property type="molecule type" value="mRNA"/>
</dbReference>
<dbReference type="EMBL" id="BC048053">
    <property type="protein sequence ID" value="AAH48053.1"/>
    <property type="molecule type" value="mRNA"/>
</dbReference>
<dbReference type="EMBL" id="BC063943">
    <property type="protein sequence ID" value="AAH63943.1"/>
    <property type="molecule type" value="mRNA"/>
</dbReference>
<dbReference type="RefSeq" id="NP_957175.1">
    <property type="nucleotide sequence ID" value="NM_200881.1"/>
</dbReference>
<dbReference type="SMR" id="Q6P3L6"/>
<dbReference type="FunCoup" id="Q6P3L6">
    <property type="interactions" value="1548"/>
</dbReference>
<dbReference type="STRING" id="7955.ENSDARP00000014003"/>
<dbReference type="PaxDb" id="7955-ENSDARP00000014003"/>
<dbReference type="Ensembl" id="ENSDART00000005299">
    <property type="protein sequence ID" value="ENSDARP00000014003"/>
    <property type="gene ID" value="ENSDARG00000015709"/>
</dbReference>
<dbReference type="GeneID" id="327417"/>
<dbReference type="KEGG" id="dre:327417"/>
<dbReference type="AGR" id="ZFIN:ZDB-GENE-030131-5628"/>
<dbReference type="CTD" id="327417"/>
<dbReference type="ZFIN" id="ZDB-GENE-030131-5628">
    <property type="gene designation" value="hsd17b12a"/>
</dbReference>
<dbReference type="eggNOG" id="KOG1014">
    <property type="taxonomic scope" value="Eukaryota"/>
</dbReference>
<dbReference type="HOGENOM" id="CLU_010194_38_0_1"/>
<dbReference type="InParanoid" id="Q6P3L6"/>
<dbReference type="OMA" id="WTHALLW"/>
<dbReference type="OrthoDB" id="5545019at2759"/>
<dbReference type="PhylomeDB" id="Q6P3L6"/>
<dbReference type="TreeFam" id="TF314591"/>
<dbReference type="Reactome" id="R-DRE-193048">
    <property type="pathway name" value="Androgen biosynthesis"/>
</dbReference>
<dbReference type="Reactome" id="R-DRE-75876">
    <property type="pathway name" value="Synthesis of very long-chain fatty acyl-CoAs"/>
</dbReference>
<dbReference type="UniPathway" id="UPA00094"/>
<dbReference type="UniPathway" id="UPA00769"/>
<dbReference type="PRO" id="PR:Q6P3L6"/>
<dbReference type="Proteomes" id="UP000000437">
    <property type="component" value="Chromosome 25"/>
</dbReference>
<dbReference type="Bgee" id="ENSDARG00000015709">
    <property type="expression patterns" value="Expressed in cleaving embryo and 37 other cell types or tissues"/>
</dbReference>
<dbReference type="GO" id="GO:0005783">
    <property type="term" value="C:endoplasmic reticulum"/>
    <property type="evidence" value="ECO:0000318"/>
    <property type="project" value="GO_Central"/>
</dbReference>
<dbReference type="GO" id="GO:0005789">
    <property type="term" value="C:endoplasmic reticulum membrane"/>
    <property type="evidence" value="ECO:0007669"/>
    <property type="project" value="UniProtKB-SubCell"/>
</dbReference>
<dbReference type="GO" id="GO:0004303">
    <property type="term" value="F:estradiol 17-beta-dehydrogenase [NAD(P)+] activity"/>
    <property type="evidence" value="ECO:0007669"/>
    <property type="project" value="UniProtKB-EC"/>
</dbReference>
<dbReference type="GO" id="GO:0016491">
    <property type="term" value="F:oxidoreductase activity"/>
    <property type="evidence" value="ECO:0000318"/>
    <property type="project" value="GO_Central"/>
</dbReference>
<dbReference type="GO" id="GO:0141040">
    <property type="term" value="F:very-long-chain 3-oxoacyl-CoA reductase activity"/>
    <property type="evidence" value="ECO:0007669"/>
    <property type="project" value="UniProtKB-EC"/>
</dbReference>
<dbReference type="GO" id="GO:0006703">
    <property type="term" value="P:estrogen biosynthetic process"/>
    <property type="evidence" value="ECO:0007669"/>
    <property type="project" value="UniProtKB-UniPathway"/>
</dbReference>
<dbReference type="GO" id="GO:0006633">
    <property type="term" value="P:fatty acid biosynthetic process"/>
    <property type="evidence" value="ECO:0007669"/>
    <property type="project" value="UniProtKB-UniPathway"/>
</dbReference>
<dbReference type="CDD" id="cd05356">
    <property type="entry name" value="17beta-HSD1_like_SDR_c"/>
    <property type="match status" value="1"/>
</dbReference>
<dbReference type="FunFam" id="3.40.50.720:FF:000137">
    <property type="entry name" value="Hydroxysteroid (17-beta) dehydrogenase 3"/>
    <property type="match status" value="1"/>
</dbReference>
<dbReference type="Gene3D" id="3.40.50.720">
    <property type="entry name" value="NAD(P)-binding Rossmann-like Domain"/>
    <property type="match status" value="1"/>
</dbReference>
<dbReference type="InterPro" id="IPR036291">
    <property type="entry name" value="NAD(P)-bd_dom_sf"/>
</dbReference>
<dbReference type="InterPro" id="IPR020904">
    <property type="entry name" value="Sc_DH/Rdtase_CS"/>
</dbReference>
<dbReference type="InterPro" id="IPR002347">
    <property type="entry name" value="SDR_fam"/>
</dbReference>
<dbReference type="InterPro" id="IPR051019">
    <property type="entry name" value="VLCFA-Steroid_DH"/>
</dbReference>
<dbReference type="PANTHER" id="PTHR43899">
    <property type="entry name" value="RH59310P"/>
    <property type="match status" value="1"/>
</dbReference>
<dbReference type="PANTHER" id="PTHR43899:SF14">
    <property type="entry name" value="VERY-LONG-CHAIN 3-OXOACYL-COA REDUCTASE"/>
    <property type="match status" value="1"/>
</dbReference>
<dbReference type="Pfam" id="PF00106">
    <property type="entry name" value="adh_short"/>
    <property type="match status" value="1"/>
</dbReference>
<dbReference type="PIRSF" id="PIRSF000126">
    <property type="entry name" value="11-beta-HSD1"/>
    <property type="match status" value="1"/>
</dbReference>
<dbReference type="PRINTS" id="PR00081">
    <property type="entry name" value="GDHRDH"/>
</dbReference>
<dbReference type="PRINTS" id="PR00080">
    <property type="entry name" value="SDRFAMILY"/>
</dbReference>
<dbReference type="SUPFAM" id="SSF51735">
    <property type="entry name" value="NAD(P)-binding Rossmann-fold domains"/>
    <property type="match status" value="1"/>
</dbReference>
<dbReference type="PROSITE" id="PS00061">
    <property type="entry name" value="ADH_SHORT"/>
    <property type="match status" value="1"/>
</dbReference>
<name>DH12A_DANRE</name>
<evidence type="ECO:0000250" key="1"/>
<evidence type="ECO:0000250" key="2">
    <source>
        <dbReference type="UniProtKB" id="Q53GQ0"/>
    </source>
</evidence>
<evidence type="ECO:0000255" key="3"/>
<evidence type="ECO:0000255" key="4">
    <source>
        <dbReference type="PROSITE-ProRule" id="PRU10001"/>
    </source>
</evidence>
<evidence type="ECO:0000269" key="5">
    <source>
    </source>
</evidence>
<evidence type="ECO:0000305" key="6"/>
<keyword id="KW-0256">Endoplasmic reticulum</keyword>
<keyword id="KW-0444">Lipid biosynthesis</keyword>
<keyword id="KW-0443">Lipid metabolism</keyword>
<keyword id="KW-0472">Membrane</keyword>
<keyword id="KW-0521">NADP</keyword>
<keyword id="KW-0560">Oxidoreductase</keyword>
<keyword id="KW-1185">Reference proteome</keyword>
<keyword id="KW-0752">Steroid biosynthesis</keyword>
<keyword id="KW-0812">Transmembrane</keyword>
<keyword id="KW-1133">Transmembrane helix</keyword>
<reference key="1">
    <citation type="journal article" date="2004" name="Mol. Cell. Endocrinol.">
        <title>Identification and characterization of 17 beta-hydroxysteroid dehydrogenases in the zebrafish, Danio rerio.</title>
        <authorList>
            <person name="Mindnich R."/>
            <person name="Deluca D."/>
            <person name="Adamski J."/>
        </authorList>
    </citation>
    <scope>NUCLEOTIDE SEQUENCE [MRNA]</scope>
    <scope>DEVELOPMENTAL STAGE</scope>
</reference>
<reference key="2">
    <citation type="submission" date="2003-12" db="EMBL/GenBank/DDBJ databases">
        <authorList>
            <consortium name="NIH - Zebrafish Gene Collection (ZGC) project"/>
        </authorList>
    </citation>
    <scope>NUCLEOTIDE SEQUENCE [LARGE SCALE MRNA]</scope>
    <source>
        <strain>AB</strain>
    </source>
</reference>